<evidence type="ECO:0000305" key="1"/>
<accession>P56624</accession>
<protein>
    <recommendedName>
        <fullName>Sulfur globule protein TR2</fullName>
    </recommendedName>
</protein>
<organism>
    <name type="scientific">Thiocapsa roseopersicina</name>
    <dbReference type="NCBI Taxonomy" id="1058"/>
    <lineage>
        <taxon>Bacteria</taxon>
        <taxon>Pseudomonadati</taxon>
        <taxon>Pseudomonadota</taxon>
        <taxon>Gammaproteobacteria</taxon>
        <taxon>Chromatiales</taxon>
        <taxon>Chromatiaceae</taxon>
        <taxon>Thiocapsa</taxon>
    </lineage>
</organism>
<sequence length="40" mass="4358">FWGSGPFGMFPGGWGGPWNSPWYGPYGGYPYGGYGYPYGL</sequence>
<feature type="chain" id="PRO_0000097721" description="Sulfur globule protein TR2">
    <location>
        <begin position="1"/>
        <end position="40" status="greater than"/>
    </location>
</feature>
<feature type="non-terminal residue">
    <location>
        <position position="40"/>
    </location>
</feature>
<reference key="1">
    <citation type="journal article" date="1995" name="Arch. Microbiol.">
        <title>Isolation and characterization of sulfur globule proteins from Chromatium vinosum and Thiocapsa roseopersicina.</title>
        <authorList>
            <person name="Brune D.C."/>
        </authorList>
    </citation>
    <scope>PROTEIN SEQUENCE</scope>
    <scope>CHARACTERIZATION</scope>
    <source>
        <strain>SMG219</strain>
    </source>
</reference>
<keyword id="KW-0903">Direct protein sequencing</keyword>
<dbReference type="STRING" id="1058.SAMN05421783_101470"/>
<proteinExistence type="evidence at protein level"/>
<comment type="function">
    <text>Structural protein of the sulfur globules, which are intracellular globules that serve for sulfur storage in purple sulfur bacteria.</text>
</comment>
<comment type="subunit">
    <text>The protein envelope of the sulfur globules is composed of the three different proteins TR0, TR1 and TR2.</text>
</comment>
<comment type="similarity">
    <text evidence="1">To C.vinosum CV3.</text>
</comment>
<name>SGP3_THIRO</name>